<gene>
    <name type="primary">LMO4</name>
</gene>
<proteinExistence type="evidence at transcript level"/>
<dbReference type="EMBL" id="BC104582">
    <property type="protein sequence ID" value="AAI04583.1"/>
    <property type="molecule type" value="mRNA"/>
</dbReference>
<dbReference type="RefSeq" id="NP_001029923.1">
    <property type="nucleotide sequence ID" value="NM_001034751.1"/>
</dbReference>
<dbReference type="RefSeq" id="XP_024845460.1">
    <property type="nucleotide sequence ID" value="XM_024989692.2"/>
</dbReference>
<dbReference type="BMRB" id="Q3SWZ8"/>
<dbReference type="SMR" id="Q3SWZ8"/>
<dbReference type="FunCoup" id="Q3SWZ8">
    <property type="interactions" value="866"/>
</dbReference>
<dbReference type="STRING" id="9913.ENSBTAP00000070402"/>
<dbReference type="PaxDb" id="9913-ENSBTAP00000000389"/>
<dbReference type="Ensembl" id="ENSBTAT00000000389.6">
    <property type="protein sequence ID" value="ENSBTAP00000000389.5"/>
    <property type="gene ID" value="ENSBTAG00000000305.7"/>
</dbReference>
<dbReference type="GeneID" id="614212"/>
<dbReference type="KEGG" id="bta:614212"/>
<dbReference type="CTD" id="8543"/>
<dbReference type="VEuPathDB" id="HostDB:ENSBTAG00000000305"/>
<dbReference type="VGNC" id="VGNC:30936">
    <property type="gene designation" value="LMO4"/>
</dbReference>
<dbReference type="eggNOG" id="KOG0490">
    <property type="taxonomic scope" value="Eukaryota"/>
</dbReference>
<dbReference type="GeneTree" id="ENSGT00940000157730"/>
<dbReference type="HOGENOM" id="CLU_001357_7_1_1"/>
<dbReference type="InParanoid" id="Q3SWZ8"/>
<dbReference type="OMA" id="SLPWKRC"/>
<dbReference type="OrthoDB" id="6352355at2759"/>
<dbReference type="TreeFam" id="TF351071"/>
<dbReference type="Proteomes" id="UP000009136">
    <property type="component" value="Chromosome 3"/>
</dbReference>
<dbReference type="Bgee" id="ENSBTAG00000000305">
    <property type="expression patterns" value="Expressed in occipital lobe and 103 other cell types or tissues"/>
</dbReference>
<dbReference type="GO" id="GO:0031252">
    <property type="term" value="C:cell leading edge"/>
    <property type="evidence" value="ECO:0000250"/>
    <property type="project" value="UniProtKB"/>
</dbReference>
<dbReference type="GO" id="GO:0046872">
    <property type="term" value="F:metal ion binding"/>
    <property type="evidence" value="ECO:0007669"/>
    <property type="project" value="UniProtKB-KW"/>
</dbReference>
<dbReference type="GO" id="GO:0001843">
    <property type="term" value="P:neural tube closure"/>
    <property type="evidence" value="ECO:0000250"/>
    <property type="project" value="UniProtKB"/>
</dbReference>
<dbReference type="GO" id="GO:0033674">
    <property type="term" value="P:positive regulation of kinase activity"/>
    <property type="evidence" value="ECO:0000250"/>
    <property type="project" value="UniProtKB"/>
</dbReference>
<dbReference type="GO" id="GO:0030334">
    <property type="term" value="P:regulation of cell migration"/>
    <property type="evidence" value="ECO:0000250"/>
    <property type="project" value="UniProtKB"/>
</dbReference>
<dbReference type="CDD" id="cd09386">
    <property type="entry name" value="LIM1_LMO4"/>
    <property type="match status" value="1"/>
</dbReference>
<dbReference type="CDD" id="cd09387">
    <property type="entry name" value="LIM2_LMO4"/>
    <property type="match status" value="1"/>
</dbReference>
<dbReference type="FunFam" id="2.10.110.10:FF:000015">
    <property type="entry name" value="LIM domain only 3"/>
    <property type="match status" value="1"/>
</dbReference>
<dbReference type="FunFam" id="2.10.110.10:FF:000051">
    <property type="entry name" value="LIM domain transcription factor LMO4"/>
    <property type="match status" value="1"/>
</dbReference>
<dbReference type="Gene3D" id="2.10.110.10">
    <property type="entry name" value="Cysteine Rich Protein"/>
    <property type="match status" value="2"/>
</dbReference>
<dbReference type="InterPro" id="IPR050945">
    <property type="entry name" value="LMO_RBTN_TF"/>
</dbReference>
<dbReference type="InterPro" id="IPR001781">
    <property type="entry name" value="Znf_LIM"/>
</dbReference>
<dbReference type="PANTHER" id="PTHR45787">
    <property type="entry name" value="LD11652P"/>
    <property type="match status" value="1"/>
</dbReference>
<dbReference type="PANTHER" id="PTHR45787:SF5">
    <property type="entry name" value="LIM DOMAIN TRANSCRIPTION FACTOR LMO4"/>
    <property type="match status" value="1"/>
</dbReference>
<dbReference type="Pfam" id="PF00412">
    <property type="entry name" value="LIM"/>
    <property type="match status" value="2"/>
</dbReference>
<dbReference type="SMART" id="SM00132">
    <property type="entry name" value="LIM"/>
    <property type="match status" value="2"/>
</dbReference>
<dbReference type="SUPFAM" id="SSF57716">
    <property type="entry name" value="Glucocorticoid receptor-like (DNA-binding domain)"/>
    <property type="match status" value="4"/>
</dbReference>
<dbReference type="PROSITE" id="PS00478">
    <property type="entry name" value="LIM_DOMAIN_1"/>
    <property type="match status" value="2"/>
</dbReference>
<dbReference type="PROSITE" id="PS50023">
    <property type="entry name" value="LIM_DOMAIN_2"/>
    <property type="match status" value="2"/>
</dbReference>
<organism>
    <name type="scientific">Bos taurus</name>
    <name type="common">Bovine</name>
    <dbReference type="NCBI Taxonomy" id="9913"/>
    <lineage>
        <taxon>Eukaryota</taxon>
        <taxon>Metazoa</taxon>
        <taxon>Chordata</taxon>
        <taxon>Craniata</taxon>
        <taxon>Vertebrata</taxon>
        <taxon>Euteleostomi</taxon>
        <taxon>Mammalia</taxon>
        <taxon>Eutheria</taxon>
        <taxon>Laurasiatheria</taxon>
        <taxon>Artiodactyla</taxon>
        <taxon>Ruminantia</taxon>
        <taxon>Pecora</taxon>
        <taxon>Bovidae</taxon>
        <taxon>Bovinae</taxon>
        <taxon>Bos</taxon>
    </lineage>
</organism>
<sequence>MVNPGSSSQPPPVTAGSLSWKRCAGCGGKIADRFLLYAMDSYWHSRCLKCSCCQAQLGDIGTSCYTKSGMILCRNDYIRLFGNSGACSACGQSIPASELVMRAQGNVYHLKCFTCSTCRNRLVPGDRFHYINGSLFCEHDRPTALINGHLNSLQSNPLLPDQKVC</sequence>
<comment type="function">
    <text evidence="1">Transcription cofactor. Plays a role in establishing motor neuron identity, in concert with MNX1, acting, at least in part, to disrupt LDB1-LHX3 complexes thereby negatively modulating interneuron genes in motor neurons.</text>
</comment>
<comment type="subunit">
    <text evidence="1">Interacts strongly with LDBS. Interacts with LDB2 and LDB1. Interaction with complexes consisting of at least LDB1 and LHX3 acts to disassemble the complex; may preferentially disassemble LDB1-LHX3 complexes rather than complexes consisting of LDB1, LHX3 and ISL1. Interacts (via the LIM zinc-binding domain 1) with RBBP8. Interacts with both RPPB8 and LDB1 through the same face and cannot bind to both proteins simultaneously. Interacts with BRCA1 (via the BRCT domains); the interaction represses BRCA1 transcriptional activity. Interacts with DEAF1; LMO4 blocks export from nucleus.</text>
</comment>
<name>LMO4_BOVIN</name>
<accession>Q3SWZ8</accession>
<keyword id="KW-0440">LIM domain</keyword>
<keyword id="KW-0479">Metal-binding</keyword>
<keyword id="KW-1185">Reference proteome</keyword>
<keyword id="KW-0677">Repeat</keyword>
<keyword id="KW-0804">Transcription</keyword>
<keyword id="KW-0805">Transcription regulation</keyword>
<keyword id="KW-0862">Zinc</keyword>
<feature type="chain" id="PRO_0000265108" description="LIM domain transcription factor LMO4">
    <location>
        <begin position="1"/>
        <end position="165"/>
    </location>
</feature>
<feature type="domain" description="LIM zinc-binding 1" evidence="2">
    <location>
        <begin position="23"/>
        <end position="83"/>
    </location>
</feature>
<feature type="domain" description="LIM zinc-binding 2" evidence="2">
    <location>
        <begin position="87"/>
        <end position="147"/>
    </location>
</feature>
<evidence type="ECO:0000250" key="1">
    <source>
        <dbReference type="UniProtKB" id="P61969"/>
    </source>
</evidence>
<evidence type="ECO:0000255" key="2">
    <source>
        <dbReference type="PROSITE-ProRule" id="PRU00125"/>
    </source>
</evidence>
<protein>
    <recommendedName>
        <fullName>LIM domain transcription factor LMO4</fullName>
    </recommendedName>
    <alternativeName>
        <fullName>LIM domain only protein 4</fullName>
        <shortName>LMO-4</shortName>
    </alternativeName>
</protein>
<reference key="1">
    <citation type="submission" date="2005-09" db="EMBL/GenBank/DDBJ databases">
        <authorList>
            <consortium name="NIH - Mammalian Gene Collection (MGC) project"/>
        </authorList>
    </citation>
    <scope>NUCLEOTIDE SEQUENCE [LARGE SCALE MRNA]</scope>
    <source>
        <strain>Hereford</strain>
        <tissue>Ascending colon</tissue>
    </source>
</reference>